<name>HBB_LEONI</name>
<comment type="function">
    <text>Involved in oxygen transport from the lung to the various peripheral tissues.</text>
</comment>
<comment type="subunit">
    <text>Heterotetramer of two alpha chains and two beta chains.</text>
</comment>
<comment type="tissue specificity">
    <text>Red blood cells.</text>
</comment>
<comment type="similarity">
    <text evidence="3">Belongs to the globin family.</text>
</comment>
<reference key="1">
    <citation type="journal article" date="1971" name="Biochem. Genet.">
        <title>Primate hemoglobins: some sequences and some proposals concerning the character of evolution and mutation.</title>
        <authorList>
            <person name="Boyer S.H."/>
            <person name="Crosby E.F."/>
            <person name="Noyes A.N."/>
            <person name="Fuller G.F."/>
            <person name="Leslie S.E."/>
            <person name="Donaldson L.J."/>
            <person name="Vrablik G.R."/>
            <person name="Schaefer E.W. Jr."/>
            <person name="Thurmon T.F."/>
        </authorList>
    </citation>
    <scope>PROTEIN SEQUENCE</scope>
</reference>
<feature type="chain" id="PRO_0000053097" description="Hemoglobin subunit beta">
    <location>
        <begin position="1"/>
        <end position="146"/>
    </location>
</feature>
<feature type="domain" description="Globin" evidence="3">
    <location>
        <begin position="2"/>
        <end position="146"/>
    </location>
</feature>
<feature type="binding site" description="distal binding residue">
    <location>
        <position position="63"/>
    </location>
    <ligand>
        <name>heme b</name>
        <dbReference type="ChEBI" id="CHEBI:60344"/>
    </ligand>
    <ligandPart>
        <name>Fe</name>
        <dbReference type="ChEBI" id="CHEBI:18248"/>
    </ligandPart>
</feature>
<feature type="binding site" description="proximal binding residue">
    <location>
        <position position="92"/>
    </location>
    <ligand>
        <name>heme b</name>
        <dbReference type="ChEBI" id="CHEBI:60344"/>
    </ligand>
    <ligandPart>
        <name>Fe</name>
        <dbReference type="ChEBI" id="CHEBI:18248"/>
    </ligandPart>
</feature>
<feature type="modified residue" description="N-acetylvaline" evidence="1">
    <location>
        <position position="1"/>
    </location>
</feature>
<feature type="modified residue" description="Phosphothreonine" evidence="2">
    <location>
        <position position="12"/>
    </location>
</feature>
<feature type="modified residue" description="Phosphoserine" evidence="2">
    <location>
        <position position="44"/>
    </location>
</feature>
<feature type="modified residue" description="N6-acetyllysine" evidence="2">
    <location>
        <position position="59"/>
    </location>
</feature>
<feature type="modified residue" description="N6-acetyllysine" evidence="2">
    <location>
        <position position="82"/>
    </location>
</feature>
<feature type="modified residue" description="S-nitrosocysteine" evidence="2">
    <location>
        <position position="93"/>
    </location>
</feature>
<feature type="modified residue" description="N6-acetyllysine" evidence="2">
    <location>
        <position position="144"/>
    </location>
</feature>
<sequence>VHLTGEEKSAVTTLWGKVNVEEVGGEALGRLLVVYPWTQRFFESFGDLSSPDAVMNNPKVKAHGKKVLGAFSDGLAHLDNLKGTFAQLSELHCDKLHVDPENFRLLGNVLVCVLAHHFGKEFTPQVQAAYQKVVAGVANALAHKYH</sequence>
<accession>P68054</accession>
<accession>P02037</accession>
<protein>
    <recommendedName>
        <fullName>Hemoglobin subunit beta</fullName>
    </recommendedName>
    <alternativeName>
        <fullName>Beta-globin</fullName>
    </alternativeName>
    <alternativeName>
        <fullName>Hemoglobin beta chain</fullName>
    </alternativeName>
</protein>
<evidence type="ECO:0000250" key="1">
    <source>
        <dbReference type="UniProtKB" id="P02086"/>
    </source>
</evidence>
<evidence type="ECO:0000250" key="2">
    <source>
        <dbReference type="UniProtKB" id="P68871"/>
    </source>
</evidence>
<evidence type="ECO:0000255" key="3">
    <source>
        <dbReference type="PROSITE-ProRule" id="PRU00238"/>
    </source>
</evidence>
<proteinExistence type="evidence at protein level"/>
<dbReference type="PIR" id="A02358">
    <property type="entry name" value="HBMQN"/>
</dbReference>
<dbReference type="SMR" id="P68054"/>
<dbReference type="GO" id="GO:0072562">
    <property type="term" value="C:blood microparticle"/>
    <property type="evidence" value="ECO:0007669"/>
    <property type="project" value="TreeGrafter"/>
</dbReference>
<dbReference type="GO" id="GO:0031838">
    <property type="term" value="C:haptoglobin-hemoglobin complex"/>
    <property type="evidence" value="ECO:0007669"/>
    <property type="project" value="TreeGrafter"/>
</dbReference>
<dbReference type="GO" id="GO:0005833">
    <property type="term" value="C:hemoglobin complex"/>
    <property type="evidence" value="ECO:0007669"/>
    <property type="project" value="InterPro"/>
</dbReference>
<dbReference type="GO" id="GO:0031720">
    <property type="term" value="F:haptoglobin binding"/>
    <property type="evidence" value="ECO:0007669"/>
    <property type="project" value="TreeGrafter"/>
</dbReference>
<dbReference type="GO" id="GO:0020037">
    <property type="term" value="F:heme binding"/>
    <property type="evidence" value="ECO:0007669"/>
    <property type="project" value="InterPro"/>
</dbReference>
<dbReference type="GO" id="GO:0031721">
    <property type="term" value="F:hemoglobin alpha binding"/>
    <property type="evidence" value="ECO:0007669"/>
    <property type="project" value="TreeGrafter"/>
</dbReference>
<dbReference type="GO" id="GO:0046872">
    <property type="term" value="F:metal ion binding"/>
    <property type="evidence" value="ECO:0007669"/>
    <property type="project" value="UniProtKB-KW"/>
</dbReference>
<dbReference type="GO" id="GO:0043177">
    <property type="term" value="F:organic acid binding"/>
    <property type="evidence" value="ECO:0007669"/>
    <property type="project" value="TreeGrafter"/>
</dbReference>
<dbReference type="GO" id="GO:0019825">
    <property type="term" value="F:oxygen binding"/>
    <property type="evidence" value="ECO:0007669"/>
    <property type="project" value="InterPro"/>
</dbReference>
<dbReference type="GO" id="GO:0005344">
    <property type="term" value="F:oxygen carrier activity"/>
    <property type="evidence" value="ECO:0007669"/>
    <property type="project" value="UniProtKB-KW"/>
</dbReference>
<dbReference type="GO" id="GO:0004601">
    <property type="term" value="F:peroxidase activity"/>
    <property type="evidence" value="ECO:0007669"/>
    <property type="project" value="TreeGrafter"/>
</dbReference>
<dbReference type="GO" id="GO:0042744">
    <property type="term" value="P:hydrogen peroxide catabolic process"/>
    <property type="evidence" value="ECO:0007669"/>
    <property type="project" value="TreeGrafter"/>
</dbReference>
<dbReference type="CDD" id="cd08925">
    <property type="entry name" value="Hb-beta-like"/>
    <property type="match status" value="1"/>
</dbReference>
<dbReference type="FunFam" id="1.10.490.10:FF:000001">
    <property type="entry name" value="Hemoglobin subunit beta"/>
    <property type="match status" value="1"/>
</dbReference>
<dbReference type="Gene3D" id="1.10.490.10">
    <property type="entry name" value="Globins"/>
    <property type="match status" value="1"/>
</dbReference>
<dbReference type="InterPro" id="IPR000971">
    <property type="entry name" value="Globin"/>
</dbReference>
<dbReference type="InterPro" id="IPR009050">
    <property type="entry name" value="Globin-like_sf"/>
</dbReference>
<dbReference type="InterPro" id="IPR012292">
    <property type="entry name" value="Globin/Proto"/>
</dbReference>
<dbReference type="InterPro" id="IPR002337">
    <property type="entry name" value="Hemoglobin_b"/>
</dbReference>
<dbReference type="InterPro" id="IPR050056">
    <property type="entry name" value="Hemoglobin_oxygen_transport"/>
</dbReference>
<dbReference type="PANTHER" id="PTHR11442">
    <property type="entry name" value="HEMOGLOBIN FAMILY MEMBER"/>
    <property type="match status" value="1"/>
</dbReference>
<dbReference type="PANTHER" id="PTHR11442:SF42">
    <property type="entry name" value="HEMOGLOBIN SUBUNIT BETA"/>
    <property type="match status" value="1"/>
</dbReference>
<dbReference type="Pfam" id="PF00042">
    <property type="entry name" value="Globin"/>
    <property type="match status" value="1"/>
</dbReference>
<dbReference type="PRINTS" id="PR00814">
    <property type="entry name" value="BETAHAEM"/>
</dbReference>
<dbReference type="SUPFAM" id="SSF46458">
    <property type="entry name" value="Globin-like"/>
    <property type="match status" value="1"/>
</dbReference>
<dbReference type="PROSITE" id="PS01033">
    <property type="entry name" value="GLOBIN"/>
    <property type="match status" value="1"/>
</dbReference>
<gene>
    <name type="primary">HBB</name>
</gene>
<keyword id="KW-0007">Acetylation</keyword>
<keyword id="KW-0903">Direct protein sequencing</keyword>
<keyword id="KW-0349">Heme</keyword>
<keyword id="KW-0408">Iron</keyword>
<keyword id="KW-0479">Metal-binding</keyword>
<keyword id="KW-0561">Oxygen transport</keyword>
<keyword id="KW-0597">Phosphoprotein</keyword>
<keyword id="KW-0702">S-nitrosylation</keyword>
<keyword id="KW-0813">Transport</keyword>
<organism>
    <name type="scientific">Leontocebus nigricollis</name>
    <name type="common">Black-mantled tamarin</name>
    <name type="synonym">Saguinus nigricollis</name>
    <dbReference type="NCBI Taxonomy" id="9489"/>
    <lineage>
        <taxon>Eukaryota</taxon>
        <taxon>Metazoa</taxon>
        <taxon>Chordata</taxon>
        <taxon>Craniata</taxon>
        <taxon>Vertebrata</taxon>
        <taxon>Euteleostomi</taxon>
        <taxon>Mammalia</taxon>
        <taxon>Eutheria</taxon>
        <taxon>Euarchontoglires</taxon>
        <taxon>Primates</taxon>
        <taxon>Haplorrhini</taxon>
        <taxon>Platyrrhini</taxon>
        <taxon>Cebidae</taxon>
        <taxon>Callitrichinae</taxon>
        <taxon>Leontocebus</taxon>
    </lineage>
</organism>